<organism>
    <name type="scientific">Streptococcus gordonii (strain Challis / ATCC 35105 / BCRC 15272 / CH1 / DL1 / V288)</name>
    <dbReference type="NCBI Taxonomy" id="467705"/>
    <lineage>
        <taxon>Bacteria</taxon>
        <taxon>Bacillati</taxon>
        <taxon>Bacillota</taxon>
        <taxon>Bacilli</taxon>
        <taxon>Lactobacillales</taxon>
        <taxon>Streptococcaceae</taxon>
        <taxon>Streptococcus</taxon>
    </lineage>
</organism>
<protein>
    <recommendedName>
        <fullName evidence="1">Tyrosine--tRNA ligase</fullName>
        <ecNumber evidence="1">6.1.1.1</ecNumber>
    </recommendedName>
    <alternativeName>
        <fullName evidence="1">Tyrosyl-tRNA synthetase</fullName>
        <shortName evidence="1">TyrRS</shortName>
    </alternativeName>
</protein>
<feature type="chain" id="PRO_1000088632" description="Tyrosine--tRNA ligase">
    <location>
        <begin position="1"/>
        <end position="418"/>
    </location>
</feature>
<feature type="domain" description="S4 RNA-binding" evidence="1">
    <location>
        <begin position="352"/>
        <end position="418"/>
    </location>
</feature>
<feature type="short sequence motif" description="'HIGH' region">
    <location>
        <begin position="39"/>
        <end position="48"/>
    </location>
</feature>
<feature type="short sequence motif" description="'KMSKS' region">
    <location>
        <begin position="229"/>
        <end position="233"/>
    </location>
</feature>
<feature type="binding site" evidence="1">
    <location>
        <position position="34"/>
    </location>
    <ligand>
        <name>L-tyrosine</name>
        <dbReference type="ChEBI" id="CHEBI:58315"/>
    </ligand>
</feature>
<feature type="binding site" evidence="1">
    <location>
        <position position="169"/>
    </location>
    <ligand>
        <name>L-tyrosine</name>
        <dbReference type="ChEBI" id="CHEBI:58315"/>
    </ligand>
</feature>
<feature type="binding site" evidence="1">
    <location>
        <position position="173"/>
    </location>
    <ligand>
        <name>L-tyrosine</name>
        <dbReference type="ChEBI" id="CHEBI:58315"/>
    </ligand>
</feature>
<feature type="binding site" evidence="1">
    <location>
        <position position="232"/>
    </location>
    <ligand>
        <name>ATP</name>
        <dbReference type="ChEBI" id="CHEBI:30616"/>
    </ligand>
</feature>
<name>SYY_STRGC</name>
<gene>
    <name evidence="1" type="primary">tyrS</name>
    <name type="ordered locus">SGO_1929</name>
</gene>
<dbReference type="EC" id="6.1.1.1" evidence="1"/>
<dbReference type="EMBL" id="CP000725">
    <property type="protein sequence ID" value="ABV10350.1"/>
    <property type="molecule type" value="Genomic_DNA"/>
</dbReference>
<dbReference type="RefSeq" id="WP_012130946.1">
    <property type="nucleotide sequence ID" value="NC_009785.1"/>
</dbReference>
<dbReference type="SMR" id="A8AZI5"/>
<dbReference type="STRING" id="467705.SGO_1929"/>
<dbReference type="KEGG" id="sgo:SGO_1929"/>
<dbReference type="eggNOG" id="COG0162">
    <property type="taxonomic scope" value="Bacteria"/>
</dbReference>
<dbReference type="HOGENOM" id="CLU_024003_0_3_9"/>
<dbReference type="Proteomes" id="UP000001131">
    <property type="component" value="Chromosome"/>
</dbReference>
<dbReference type="GO" id="GO:0005829">
    <property type="term" value="C:cytosol"/>
    <property type="evidence" value="ECO:0007669"/>
    <property type="project" value="TreeGrafter"/>
</dbReference>
<dbReference type="GO" id="GO:0005524">
    <property type="term" value="F:ATP binding"/>
    <property type="evidence" value="ECO:0007669"/>
    <property type="project" value="UniProtKB-UniRule"/>
</dbReference>
<dbReference type="GO" id="GO:0003723">
    <property type="term" value="F:RNA binding"/>
    <property type="evidence" value="ECO:0007669"/>
    <property type="project" value="UniProtKB-KW"/>
</dbReference>
<dbReference type="GO" id="GO:0004831">
    <property type="term" value="F:tyrosine-tRNA ligase activity"/>
    <property type="evidence" value="ECO:0007669"/>
    <property type="project" value="UniProtKB-UniRule"/>
</dbReference>
<dbReference type="GO" id="GO:0006437">
    <property type="term" value="P:tyrosyl-tRNA aminoacylation"/>
    <property type="evidence" value="ECO:0007669"/>
    <property type="project" value="UniProtKB-UniRule"/>
</dbReference>
<dbReference type="CDD" id="cd00165">
    <property type="entry name" value="S4"/>
    <property type="match status" value="1"/>
</dbReference>
<dbReference type="CDD" id="cd00805">
    <property type="entry name" value="TyrRS_core"/>
    <property type="match status" value="1"/>
</dbReference>
<dbReference type="FunFam" id="1.10.240.10:FF:000001">
    <property type="entry name" value="Tyrosine--tRNA ligase"/>
    <property type="match status" value="1"/>
</dbReference>
<dbReference type="FunFam" id="3.10.290.10:FF:000012">
    <property type="entry name" value="Tyrosine--tRNA ligase"/>
    <property type="match status" value="1"/>
</dbReference>
<dbReference type="FunFam" id="3.40.50.620:FF:000008">
    <property type="entry name" value="Tyrosine--tRNA ligase"/>
    <property type="match status" value="1"/>
</dbReference>
<dbReference type="Gene3D" id="3.40.50.620">
    <property type="entry name" value="HUPs"/>
    <property type="match status" value="1"/>
</dbReference>
<dbReference type="Gene3D" id="3.10.290.10">
    <property type="entry name" value="RNA-binding S4 domain"/>
    <property type="match status" value="1"/>
</dbReference>
<dbReference type="Gene3D" id="1.10.240.10">
    <property type="entry name" value="Tyrosyl-Transfer RNA Synthetase"/>
    <property type="match status" value="1"/>
</dbReference>
<dbReference type="HAMAP" id="MF_02006">
    <property type="entry name" value="Tyr_tRNA_synth_type1"/>
    <property type="match status" value="1"/>
</dbReference>
<dbReference type="InterPro" id="IPR001412">
    <property type="entry name" value="aa-tRNA-synth_I_CS"/>
</dbReference>
<dbReference type="InterPro" id="IPR002305">
    <property type="entry name" value="aa-tRNA-synth_Ic"/>
</dbReference>
<dbReference type="InterPro" id="IPR014729">
    <property type="entry name" value="Rossmann-like_a/b/a_fold"/>
</dbReference>
<dbReference type="InterPro" id="IPR002942">
    <property type="entry name" value="S4_RNA-bd"/>
</dbReference>
<dbReference type="InterPro" id="IPR036986">
    <property type="entry name" value="S4_RNA-bd_sf"/>
</dbReference>
<dbReference type="InterPro" id="IPR054608">
    <property type="entry name" value="SYY-like_C"/>
</dbReference>
<dbReference type="InterPro" id="IPR002307">
    <property type="entry name" value="Tyr-tRNA-ligase"/>
</dbReference>
<dbReference type="InterPro" id="IPR024088">
    <property type="entry name" value="Tyr-tRNA-ligase_bac-type"/>
</dbReference>
<dbReference type="InterPro" id="IPR024107">
    <property type="entry name" value="Tyr-tRNA-ligase_bac_1"/>
</dbReference>
<dbReference type="NCBIfam" id="TIGR00234">
    <property type="entry name" value="tyrS"/>
    <property type="match status" value="1"/>
</dbReference>
<dbReference type="PANTHER" id="PTHR11766:SF0">
    <property type="entry name" value="TYROSINE--TRNA LIGASE, MITOCHONDRIAL"/>
    <property type="match status" value="1"/>
</dbReference>
<dbReference type="PANTHER" id="PTHR11766">
    <property type="entry name" value="TYROSYL-TRNA SYNTHETASE"/>
    <property type="match status" value="1"/>
</dbReference>
<dbReference type="Pfam" id="PF22421">
    <property type="entry name" value="SYY_C-terminal"/>
    <property type="match status" value="1"/>
</dbReference>
<dbReference type="Pfam" id="PF00579">
    <property type="entry name" value="tRNA-synt_1b"/>
    <property type="match status" value="1"/>
</dbReference>
<dbReference type="PRINTS" id="PR01040">
    <property type="entry name" value="TRNASYNTHTYR"/>
</dbReference>
<dbReference type="SMART" id="SM00363">
    <property type="entry name" value="S4"/>
    <property type="match status" value="1"/>
</dbReference>
<dbReference type="SUPFAM" id="SSF55174">
    <property type="entry name" value="Alpha-L RNA-binding motif"/>
    <property type="match status" value="1"/>
</dbReference>
<dbReference type="SUPFAM" id="SSF52374">
    <property type="entry name" value="Nucleotidylyl transferase"/>
    <property type="match status" value="1"/>
</dbReference>
<dbReference type="PROSITE" id="PS00178">
    <property type="entry name" value="AA_TRNA_LIGASE_I"/>
    <property type="match status" value="1"/>
</dbReference>
<dbReference type="PROSITE" id="PS50889">
    <property type="entry name" value="S4"/>
    <property type="match status" value="1"/>
</dbReference>
<proteinExistence type="inferred from homology"/>
<keyword id="KW-0030">Aminoacyl-tRNA synthetase</keyword>
<keyword id="KW-0067">ATP-binding</keyword>
<keyword id="KW-0963">Cytoplasm</keyword>
<keyword id="KW-0436">Ligase</keyword>
<keyword id="KW-0547">Nucleotide-binding</keyword>
<keyword id="KW-0648">Protein biosynthesis</keyword>
<keyword id="KW-1185">Reference proteome</keyword>
<keyword id="KW-0694">RNA-binding</keyword>
<reference key="1">
    <citation type="journal article" date="2007" name="J. Bacteriol.">
        <title>Genome-wide transcriptional changes in Streptococcus gordonii in response to competence signaling peptide.</title>
        <authorList>
            <person name="Vickerman M.M."/>
            <person name="Iobst S."/>
            <person name="Jesionowski A.M."/>
            <person name="Gill S.R."/>
        </authorList>
    </citation>
    <scope>NUCLEOTIDE SEQUENCE [LARGE SCALE GENOMIC DNA]</scope>
    <source>
        <strain>Challis / ATCC 35105 / BCRC 15272 / CH1 / DL1 / V288</strain>
    </source>
</reference>
<accession>A8AZI5</accession>
<sequence length="418" mass="47435">MHIFDELKERGLIFQTTDEEALRQELEEGQVSYYTGYDPTADSLHLGHLVAILTSRRLQLAGHKPYALVGGATGLIGDPSFKDAERSLQTKETVEGWVKSIQGQLAGLLDFENGQNKAEMVNNYDWFSDISFIDFLRDVGKYFTVNYMMSKESVKKRIETGISYTEFAYQIMQGYDFFILNQKHGVTLQIGGSDQWGNMTAGTELLRRKADKTGHVITVPLITDASGKKFGKSEGNAVWLNADKTSPYEMYQFWMNVMDDDAVRFLKIFTFLSLDEIEEIRKQFEAAPHERLAQKILAREVVTLVHGEKAYQEALNITEQLFAGNIKNLSVKELKQGLRGVPNYQVQAEDNLNIVDLLVTAGVVNSKRQAREDVQNGAIYVNGDRIQDLDYTLSDADKLENELTVIRRGKKKYFVLTY</sequence>
<comment type="function">
    <text evidence="1">Catalyzes the attachment of tyrosine to tRNA(Tyr) in a two-step reaction: tyrosine is first activated by ATP to form Tyr-AMP and then transferred to the acceptor end of tRNA(Tyr).</text>
</comment>
<comment type="catalytic activity">
    <reaction evidence="1">
        <text>tRNA(Tyr) + L-tyrosine + ATP = L-tyrosyl-tRNA(Tyr) + AMP + diphosphate + H(+)</text>
        <dbReference type="Rhea" id="RHEA:10220"/>
        <dbReference type="Rhea" id="RHEA-COMP:9706"/>
        <dbReference type="Rhea" id="RHEA-COMP:9707"/>
        <dbReference type="ChEBI" id="CHEBI:15378"/>
        <dbReference type="ChEBI" id="CHEBI:30616"/>
        <dbReference type="ChEBI" id="CHEBI:33019"/>
        <dbReference type="ChEBI" id="CHEBI:58315"/>
        <dbReference type="ChEBI" id="CHEBI:78442"/>
        <dbReference type="ChEBI" id="CHEBI:78536"/>
        <dbReference type="ChEBI" id="CHEBI:456215"/>
        <dbReference type="EC" id="6.1.1.1"/>
    </reaction>
</comment>
<comment type="subunit">
    <text evidence="1">Homodimer.</text>
</comment>
<comment type="subcellular location">
    <subcellularLocation>
        <location evidence="1">Cytoplasm</location>
    </subcellularLocation>
</comment>
<comment type="similarity">
    <text evidence="1">Belongs to the class-I aminoacyl-tRNA synthetase family. TyrS type 1 subfamily.</text>
</comment>
<evidence type="ECO:0000255" key="1">
    <source>
        <dbReference type="HAMAP-Rule" id="MF_02006"/>
    </source>
</evidence>